<protein>
    <recommendedName>
        <fullName evidence="1">Zinc finger protein dpff-1</fullName>
    </recommendedName>
</protein>
<reference key="1">
    <citation type="journal article" date="1998" name="Science">
        <title>Genome sequence of the nematode C. elegans: a platform for investigating biology.</title>
        <authorList>
            <consortium name="The C. elegans sequencing consortium"/>
        </authorList>
    </citation>
    <scope>NUCLEOTIDE SEQUENCE [LARGE SCALE GENOMIC DNA]</scope>
    <source>
        <strain>Bristol N2</strain>
    </source>
</reference>
<reference key="2">
    <citation type="journal article" date="2017" name="Genesis">
        <title>DPFF-1 transcription factor deficiency causes the aberrant activation of MPK-1 and meiotic defects in the Caenorhabditis elegans germline.</title>
        <authorList>
            <person name="Villanueva-Chimal E."/>
            <person name="Salinas L.S."/>
            <person name="Fernandez-Cardenas L.P."/>
            <person name="Huelgas-Morales G."/>
            <person name="Cabrera-Wrooman A."/>
            <person name="Navarro R.E."/>
        </authorList>
    </citation>
    <scope>FUNCTION</scope>
    <scope>SUBCELLULAR LOCATION</scope>
    <scope>DEVELOPMENTAL STAGE</scope>
    <scope>DISRUPTION PHENOTYPE</scope>
</reference>
<proteinExistence type="evidence at transcript level"/>
<name>DPFF1_CAEEL</name>
<organism>
    <name type="scientific">Caenorhabditis elegans</name>
    <dbReference type="NCBI Taxonomy" id="6239"/>
    <lineage>
        <taxon>Eukaryota</taxon>
        <taxon>Metazoa</taxon>
        <taxon>Ecdysozoa</taxon>
        <taxon>Nematoda</taxon>
        <taxon>Chromadorea</taxon>
        <taxon>Rhabditida</taxon>
        <taxon>Rhabditina</taxon>
        <taxon>Rhabditomorpha</taxon>
        <taxon>Rhabditoidea</taxon>
        <taxon>Rhabditidae</taxon>
        <taxon>Peloderinae</taxon>
        <taxon>Caenorhabditis</taxon>
    </lineage>
</organism>
<gene>
    <name evidence="7" type="primary">dpff-1</name>
    <name evidence="7" type="ORF">C28H8.9</name>
</gene>
<feature type="chain" id="PRO_0000168157" description="Zinc finger protein dpff-1" evidence="6">
    <location>
        <begin position="1"/>
        <end position="372"/>
    </location>
</feature>
<feature type="zinc finger region" description="C2H2-type" evidence="2">
    <location>
        <begin position="212"/>
        <end position="235"/>
    </location>
</feature>
<feature type="zinc finger region" description="PHD-type 1" evidence="3">
    <location>
        <begin position="256"/>
        <end position="314"/>
    </location>
</feature>
<feature type="zinc finger region" description="PHD-type 2" evidence="3">
    <location>
        <begin position="316"/>
        <end position="361"/>
    </location>
</feature>
<feature type="region of interest" description="Disordered" evidence="4">
    <location>
        <begin position="108"/>
        <end position="204"/>
    </location>
</feature>
<feature type="compositionally biased region" description="Polar residues" evidence="4">
    <location>
        <begin position="109"/>
        <end position="131"/>
    </location>
</feature>
<feature type="compositionally biased region" description="Basic and acidic residues" evidence="4">
    <location>
        <begin position="132"/>
        <end position="141"/>
    </location>
</feature>
<feature type="compositionally biased region" description="Acidic residues" evidence="4">
    <location>
        <begin position="142"/>
        <end position="158"/>
    </location>
</feature>
<feature type="compositionally biased region" description="Polar residues" evidence="4">
    <location>
        <begin position="184"/>
        <end position="196"/>
    </location>
</feature>
<feature type="splice variant" id="VSP_057651" description="In isoform c." evidence="6">
    <original>T</original>
    <variation>TVRFA</variation>
    <location>
        <position position="112"/>
    </location>
</feature>
<feature type="splice variant" id="VSP_057652" description="In isoform b and isoform c." evidence="6">
    <original>VPTTRSSVSRL</original>
    <variation>NAARNTKASRV</variation>
    <location>
        <begin position="182"/>
        <end position="192"/>
    </location>
</feature>
<feature type="splice variant" id="VSP_057653" description="In isoform b and isoform c." evidence="6">
    <location>
        <begin position="193"/>
        <end position="372"/>
    </location>
</feature>
<accession>Q09477</accession>
<accession>A8WFG1</accession>
<accession>H2KZ28</accession>
<accession>Q09247</accession>
<comment type="function">
    <text evidence="5">Probable transcription factor, involved in meiosis and stress protection.</text>
</comment>
<comment type="subcellular location">
    <subcellularLocation>
        <location evidence="5">Nucleus</location>
    </subcellularLocation>
    <subcellularLocation>
        <location evidence="5">Cytoplasm</location>
    </subcellularLocation>
    <text evidence="5">Expressed at higher level in nuclei.</text>
</comment>
<comment type="alternative products">
    <event type="alternative splicing"/>
    <isoform>
        <id>Q09477-1</id>
        <name evidence="7">a</name>
        <sequence type="displayed"/>
    </isoform>
    <isoform>
        <id>Q09477-2</id>
        <name evidence="8">b</name>
        <sequence type="described" ref="VSP_057652 VSP_057653"/>
    </isoform>
    <isoform>
        <id>Q09477-3</id>
        <name evidence="9">c</name>
        <sequence type="described" ref="VSP_057651 VSP_057652 VSP_057653"/>
    </isoform>
</comment>
<comment type="developmental stage">
    <text evidence="5">Expressed throughout all embryonic and post-embryonic stages.</text>
</comment>
<comment type="disruption phenotype">
    <text evidence="5">RNAi-mediated knockdown reduces expression of sod-3 (PubMed:28940692). RNAi-mediated knockdown on a cep-1 mutant background increases germ cell apoptosis (PubMed:28940692).</text>
</comment>
<comment type="similarity">
    <text evidence="6">Belongs to the requiem/DPF family.</text>
</comment>
<evidence type="ECO:0000250" key="1">
    <source>
        <dbReference type="UniProtKB" id="Q92784"/>
    </source>
</evidence>
<evidence type="ECO:0000255" key="2">
    <source>
        <dbReference type="PROSITE-ProRule" id="PRU00042"/>
    </source>
</evidence>
<evidence type="ECO:0000255" key="3">
    <source>
        <dbReference type="PROSITE-ProRule" id="PRU00146"/>
    </source>
</evidence>
<evidence type="ECO:0000256" key="4">
    <source>
        <dbReference type="SAM" id="MobiDB-lite"/>
    </source>
</evidence>
<evidence type="ECO:0000269" key="5">
    <source>
    </source>
</evidence>
<evidence type="ECO:0000305" key="6"/>
<evidence type="ECO:0000312" key="7">
    <source>
        <dbReference type="WormBase" id="C28H8.9a"/>
    </source>
</evidence>
<evidence type="ECO:0000312" key="8">
    <source>
        <dbReference type="WormBase" id="C28H8.9b"/>
    </source>
</evidence>
<evidence type="ECO:0000312" key="9">
    <source>
        <dbReference type="WormBase" id="C28H8.9c"/>
    </source>
</evidence>
<dbReference type="EMBL" id="FO080703">
    <property type="protein sequence ID" value="CCD65970.1"/>
    <property type="molecule type" value="Genomic_DNA"/>
</dbReference>
<dbReference type="EMBL" id="FO080703">
    <property type="protein sequence ID" value="CCD65971.1"/>
    <property type="molecule type" value="Genomic_DNA"/>
</dbReference>
<dbReference type="EMBL" id="FO080703">
    <property type="protein sequence ID" value="CCD65978.1"/>
    <property type="molecule type" value="Genomic_DNA"/>
</dbReference>
<dbReference type="PIR" id="F88469">
    <property type="entry name" value="F88469"/>
</dbReference>
<dbReference type="RefSeq" id="NP_001122678.1">
    <molecule id="Q09477-3"/>
    <property type="nucleotide sequence ID" value="NM_001129206.5"/>
</dbReference>
<dbReference type="RefSeq" id="NP_001359900.1">
    <molecule id="Q09477-2"/>
    <property type="nucleotide sequence ID" value="NM_001372602.1"/>
</dbReference>
<dbReference type="RefSeq" id="NP_498281.2">
    <molecule id="Q09477-1"/>
    <property type="nucleotide sequence ID" value="NM_065880.5"/>
</dbReference>
<dbReference type="RefSeq" id="NP_871638.1">
    <property type="nucleotide sequence ID" value="NM_181909.3"/>
</dbReference>
<dbReference type="SMR" id="Q09477"/>
<dbReference type="BioGRID" id="41054">
    <property type="interactions" value="19"/>
</dbReference>
<dbReference type="ComplexPortal" id="CPX-1031">
    <property type="entry name" value="PBAF chromatin remodeling complex"/>
</dbReference>
<dbReference type="FunCoup" id="Q09477">
    <property type="interactions" value="2373"/>
</dbReference>
<dbReference type="IntAct" id="Q09477">
    <property type="interactions" value="12"/>
</dbReference>
<dbReference type="STRING" id="6239.C28H8.9a.1"/>
<dbReference type="PaxDb" id="6239-C28H8.9a"/>
<dbReference type="PeptideAtlas" id="Q09477"/>
<dbReference type="EnsemblMetazoa" id="C28H8.9a.1">
    <molecule id="Q09477-1"/>
    <property type="protein sequence ID" value="C28H8.9a.1"/>
    <property type="gene ID" value="WBGene00016200"/>
</dbReference>
<dbReference type="EnsemblMetazoa" id="C28H8.9b.1">
    <molecule id="Q09477-2"/>
    <property type="protein sequence ID" value="C28H8.9b.1"/>
    <property type="gene ID" value="WBGene00016200"/>
</dbReference>
<dbReference type="EnsemblMetazoa" id="C28H8.9c.1">
    <molecule id="Q09477-3"/>
    <property type="protein sequence ID" value="C28H8.9c.1"/>
    <property type="gene ID" value="WBGene00016200"/>
</dbReference>
<dbReference type="GeneID" id="175832"/>
<dbReference type="KEGG" id="cel:CELE_C28H8.9"/>
<dbReference type="UCSC" id="C28H8.9c">
    <property type="organism name" value="c. elegans"/>
</dbReference>
<dbReference type="AGR" id="WB:WBGene00016200"/>
<dbReference type="CTD" id="175832"/>
<dbReference type="WormBase" id="C28H8.9a">
    <molecule id="Q09477-1"/>
    <property type="protein sequence ID" value="CE06896"/>
    <property type="gene ID" value="WBGene00016200"/>
    <property type="gene designation" value="dpff-1"/>
</dbReference>
<dbReference type="WormBase" id="C28H8.9b">
    <molecule id="Q09477-2"/>
    <property type="protein sequence ID" value="CE32813"/>
    <property type="gene ID" value="WBGene00016200"/>
    <property type="gene designation" value="dpff-1"/>
</dbReference>
<dbReference type="WormBase" id="C28H8.9c">
    <molecule id="Q09477-3"/>
    <property type="protein sequence ID" value="CE41615"/>
    <property type="gene ID" value="WBGene00016200"/>
    <property type="gene designation" value="dpff-1"/>
</dbReference>
<dbReference type="eggNOG" id="KOG1244">
    <property type="taxonomic scope" value="Eukaryota"/>
</dbReference>
<dbReference type="GeneTree" id="ENSGT00940000170234"/>
<dbReference type="HOGENOM" id="CLU_038980_0_1_1"/>
<dbReference type="InParanoid" id="Q09477"/>
<dbReference type="OMA" id="LMRNCIK"/>
<dbReference type="OrthoDB" id="1903104at2759"/>
<dbReference type="PhylomeDB" id="Q09477"/>
<dbReference type="SignaLink" id="Q09477"/>
<dbReference type="PRO" id="PR:Q09477"/>
<dbReference type="Proteomes" id="UP000001940">
    <property type="component" value="Chromosome III"/>
</dbReference>
<dbReference type="Bgee" id="WBGene00016200">
    <property type="expression patterns" value="Expressed in pharyngeal muscle cell (C elegans) and 4 other cell types or tissues"/>
</dbReference>
<dbReference type="GO" id="GO:0005737">
    <property type="term" value="C:cytoplasm"/>
    <property type="evidence" value="ECO:0007669"/>
    <property type="project" value="UniProtKB-SubCell"/>
</dbReference>
<dbReference type="GO" id="GO:0071565">
    <property type="term" value="C:nBAF complex"/>
    <property type="evidence" value="ECO:0000318"/>
    <property type="project" value="GO_Central"/>
</dbReference>
<dbReference type="GO" id="GO:0005634">
    <property type="term" value="C:nucleus"/>
    <property type="evidence" value="ECO:0000314"/>
    <property type="project" value="UniProtKB"/>
</dbReference>
<dbReference type="GO" id="GO:0008270">
    <property type="term" value="F:zinc ion binding"/>
    <property type="evidence" value="ECO:0007669"/>
    <property type="project" value="UniProtKB-KW"/>
</dbReference>
<dbReference type="GO" id="GO:0006915">
    <property type="term" value="P:apoptotic process"/>
    <property type="evidence" value="ECO:0000315"/>
    <property type="project" value="UniProtKB"/>
</dbReference>
<dbReference type="GO" id="GO:0006338">
    <property type="term" value="P:chromatin remodeling"/>
    <property type="evidence" value="ECO:0000303"/>
    <property type="project" value="ComplexPortal"/>
</dbReference>
<dbReference type="GO" id="GO:0051321">
    <property type="term" value="P:meiotic cell cycle"/>
    <property type="evidence" value="ECO:0000315"/>
    <property type="project" value="UniProtKB"/>
</dbReference>
<dbReference type="GO" id="GO:0007399">
    <property type="term" value="P:nervous system development"/>
    <property type="evidence" value="ECO:0000318"/>
    <property type="project" value="GO_Central"/>
</dbReference>
<dbReference type="GO" id="GO:2000781">
    <property type="term" value="P:positive regulation of double-strand break repair"/>
    <property type="evidence" value="ECO:0000303"/>
    <property type="project" value="ComplexPortal"/>
</dbReference>
<dbReference type="GO" id="GO:2000045">
    <property type="term" value="P:regulation of G1/S transition of mitotic cell cycle"/>
    <property type="evidence" value="ECO:0000303"/>
    <property type="project" value="ComplexPortal"/>
</dbReference>
<dbReference type="GO" id="GO:0030071">
    <property type="term" value="P:regulation of mitotic metaphase/anaphase transition"/>
    <property type="evidence" value="ECO:0000303"/>
    <property type="project" value="ComplexPortal"/>
</dbReference>
<dbReference type="GO" id="GO:2000819">
    <property type="term" value="P:regulation of nucleotide-excision repair"/>
    <property type="evidence" value="ECO:0000303"/>
    <property type="project" value="ComplexPortal"/>
</dbReference>
<dbReference type="GO" id="GO:0009408">
    <property type="term" value="P:response to heat"/>
    <property type="evidence" value="ECO:0000315"/>
    <property type="project" value="UniProtKB"/>
</dbReference>
<dbReference type="CDD" id="cd15526">
    <property type="entry name" value="PHD1_MOZ_d4"/>
    <property type="match status" value="1"/>
</dbReference>
<dbReference type="CDD" id="cd15530">
    <property type="entry name" value="PHD2_d4"/>
    <property type="match status" value="1"/>
</dbReference>
<dbReference type="FunFam" id="3.30.40.10:FF:000005">
    <property type="entry name" value="zinc finger protein isoform X1"/>
    <property type="match status" value="1"/>
</dbReference>
<dbReference type="Gene3D" id="3.30.40.10">
    <property type="entry name" value="Zinc/RING finger domain, C3HC4 (zinc finger)"/>
    <property type="match status" value="1"/>
</dbReference>
<dbReference type="InterPro" id="IPR025750">
    <property type="entry name" value="DPF1-3_N"/>
</dbReference>
<dbReference type="InterPro" id="IPR013087">
    <property type="entry name" value="Znf_C2H2_type"/>
</dbReference>
<dbReference type="InterPro" id="IPR011011">
    <property type="entry name" value="Znf_FYVE_PHD"/>
</dbReference>
<dbReference type="InterPro" id="IPR001965">
    <property type="entry name" value="Znf_PHD"/>
</dbReference>
<dbReference type="InterPro" id="IPR019787">
    <property type="entry name" value="Znf_PHD-finger"/>
</dbReference>
<dbReference type="InterPro" id="IPR013083">
    <property type="entry name" value="Znf_RING/FYVE/PHD"/>
</dbReference>
<dbReference type="PANTHER" id="PTHR45888:SF5">
    <property type="entry name" value="D4, ISOFORM A"/>
    <property type="match status" value="1"/>
</dbReference>
<dbReference type="PANTHER" id="PTHR45888">
    <property type="entry name" value="HL01030P-RELATED"/>
    <property type="match status" value="1"/>
</dbReference>
<dbReference type="Pfam" id="PF14051">
    <property type="entry name" value="DPF1-3_N"/>
    <property type="match status" value="1"/>
</dbReference>
<dbReference type="Pfam" id="PF00628">
    <property type="entry name" value="PHD"/>
    <property type="match status" value="2"/>
</dbReference>
<dbReference type="SMART" id="SM00249">
    <property type="entry name" value="PHD"/>
    <property type="match status" value="2"/>
</dbReference>
<dbReference type="SUPFAM" id="SSF57903">
    <property type="entry name" value="FYVE/PHD zinc finger"/>
    <property type="match status" value="1"/>
</dbReference>
<dbReference type="PROSITE" id="PS01359">
    <property type="entry name" value="ZF_PHD_1"/>
    <property type="match status" value="1"/>
</dbReference>
<dbReference type="PROSITE" id="PS50016">
    <property type="entry name" value="ZF_PHD_2"/>
    <property type="match status" value="2"/>
</dbReference>
<dbReference type="PROSITE" id="PS00028">
    <property type="entry name" value="ZINC_FINGER_C2H2_1"/>
    <property type="match status" value="1"/>
</dbReference>
<dbReference type="PROSITE" id="PS50157">
    <property type="entry name" value="ZINC_FINGER_C2H2_2"/>
    <property type="match status" value="1"/>
</dbReference>
<sequence>MISENGYMDLMRNCIKWNSRQMEDRKKRLRFPYYEHQTATAQRESRFTTRNVDHMYPSNDPNTVVQFATERWKKSKSQPPSDAVEMSMFLRENPSIQVAIDHLTPQVVGPTTESVSDSSNDSTTIRPSRQTQIKEEYRDDYVLDDELSPDEFGSDEDDWSSRKRRKGNLGPVQKATSSRKKVPTTRSSVSRLTPSRSIVKETKYEEPEEKTYPCDKCSAKYKSLAGLSYHQSYLHDQKSSQPLVKLLSPSIEISTSCDFCSGTAFMNKNTKLPEDLVSCHDCGRSGHPSCLNFNQNVTKIIKRSGWQCLECKSCTICGTSENDDKLLFCDDCDRGYHLYCLTPALEKAPDDEYSCRLCQVEFGDKASAPAKK</sequence>
<keyword id="KW-0025">Alternative splicing</keyword>
<keyword id="KW-0963">Cytoplasm</keyword>
<keyword id="KW-0479">Metal-binding</keyword>
<keyword id="KW-0539">Nucleus</keyword>
<keyword id="KW-1185">Reference proteome</keyword>
<keyword id="KW-0677">Repeat</keyword>
<keyword id="KW-0804">Transcription</keyword>
<keyword id="KW-0805">Transcription regulation</keyword>
<keyword id="KW-0862">Zinc</keyword>
<keyword id="KW-0863">Zinc-finger</keyword>